<gene>
    <name type="primary">Xab2</name>
    <name type="synonym">Syf1</name>
</gene>
<evidence type="ECO:0000250" key="1">
    <source>
        <dbReference type="UniProtKB" id="Q99PK0"/>
    </source>
</evidence>
<evidence type="ECO:0000250" key="2">
    <source>
        <dbReference type="UniProtKB" id="Q9HCS7"/>
    </source>
</evidence>
<evidence type="ECO:0000256" key="3">
    <source>
        <dbReference type="SAM" id="MobiDB-lite"/>
    </source>
</evidence>
<evidence type="ECO:0000269" key="4">
    <source>
    </source>
</evidence>
<evidence type="ECO:0000305" key="5"/>
<evidence type="ECO:0000312" key="6">
    <source>
        <dbReference type="EMBL" id="BAB22435.1"/>
    </source>
</evidence>
<proteinExistence type="evidence at protein level"/>
<feature type="chain" id="PRO_0000106415" description="Pre-mRNA-splicing factor SYF1">
    <location>
        <begin position="1"/>
        <end position="855"/>
    </location>
</feature>
<feature type="repeat" description="HAT 1" evidence="5">
    <location>
        <begin position="15"/>
        <end position="47"/>
    </location>
</feature>
<feature type="repeat" description="HAT 2" evidence="5">
    <location>
        <begin position="48"/>
        <end position="80"/>
    </location>
</feature>
<feature type="repeat" description="HAT 3" evidence="5">
    <location>
        <begin position="90"/>
        <end position="122"/>
    </location>
</feature>
<feature type="repeat" description="HAT 4" evidence="5">
    <location>
        <begin position="124"/>
        <end position="158"/>
    </location>
</feature>
<feature type="repeat" description="HAT 5" evidence="5">
    <location>
        <begin position="160"/>
        <end position="192"/>
    </location>
</feature>
<feature type="repeat" description="HAT 6">
    <location>
        <begin position="198"/>
        <end position="230"/>
    </location>
</feature>
<feature type="repeat" description="HAT 7">
    <location>
        <begin position="235"/>
        <end position="268"/>
    </location>
</feature>
<feature type="repeat" description="HAT 8">
    <location>
        <begin position="270"/>
        <end position="305"/>
    </location>
</feature>
<feature type="repeat" description="HAT 9">
    <location>
        <begin position="369"/>
        <end position="407"/>
    </location>
</feature>
<feature type="repeat" description="HAT 10">
    <location>
        <begin position="498"/>
        <end position="530"/>
    </location>
</feature>
<feature type="repeat" description="HAT 11">
    <location>
        <begin position="532"/>
        <end position="566"/>
    </location>
</feature>
<feature type="repeat" description="HAT 12">
    <location>
        <begin position="571"/>
        <end position="605"/>
    </location>
</feature>
<feature type="repeat" description="HAT 13">
    <location>
        <begin position="643"/>
        <end position="677"/>
    </location>
</feature>
<feature type="repeat" description="HAT 14">
    <location>
        <begin position="679"/>
        <end position="713"/>
    </location>
</feature>
<feature type="region of interest" description="Disordered" evidence="3">
    <location>
        <begin position="808"/>
        <end position="855"/>
    </location>
</feature>
<feature type="compositionally biased region" description="Acidic residues" evidence="3">
    <location>
        <begin position="820"/>
        <end position="834"/>
    </location>
</feature>
<feature type="modified residue" description="N6-acetyllysine" evidence="2">
    <location>
        <position position="420"/>
    </location>
</feature>
<feature type="modified residue" description="Phosphoserine" evidence="2">
    <location>
        <position position="851"/>
    </location>
</feature>
<feature type="sequence conflict" description="In Ref. 2; AAH21341." evidence="5" ref="2">
    <original>A</original>
    <variation>T</variation>
    <location>
        <position position="684"/>
    </location>
</feature>
<feature type="sequence conflict" description="In Ref. 1; BAB25790." evidence="5" ref="1">
    <original>Q</original>
    <variation>L</variation>
    <location>
        <position position="842"/>
    </location>
</feature>
<protein>
    <recommendedName>
        <fullName>Pre-mRNA-splicing factor SYF1</fullName>
    </recommendedName>
    <alternativeName>
        <fullName>XPA-binding protein 2</fullName>
    </alternativeName>
</protein>
<comment type="function">
    <text evidence="2">Involved in pre-mRNA splicing as component of the spliceosome. Involved in transcription-coupled repair (TCR), transcription and pre-mRNA splicing.</text>
</comment>
<comment type="subunit">
    <text evidence="2">Associates with RNA polymerase II, the TCR-specific proteins CKN1/CSA and ERCC6/CSB, and XPA. Identified in the spliceosome C complex. Component of the XAB2 complex, a multimeric protein complex composed of XAB2, PRPF19, AQR, ZNF830, ISY1, and PPIE. Identified in a pentameric intron-binding (IB) complex composed of AQR, XAB2, ISY1, ZNF830 and PPIE that is incorporated into the spliceosome as a preassembled complex. The IB complex does not contain PRPF19.</text>
</comment>
<comment type="subcellular location">
    <subcellularLocation>
        <location evidence="1">Nucleus</location>
    </subcellularLocation>
    <text evidence="1">Detected in the splicing complex carrying pre-mRNA.</text>
</comment>
<comment type="disruption phenotype">
    <text evidence="4">Complete embryonic lethality before 13.5 dpc. Already at 3.5 dpc, the number of homozygous mutant embryos is lower than expected.</text>
</comment>
<comment type="similarity">
    <text evidence="5">Belongs to the crooked-neck family.</text>
</comment>
<keyword id="KW-0007">Acetylation</keyword>
<keyword id="KW-0227">DNA damage</keyword>
<keyword id="KW-0234">DNA repair</keyword>
<keyword id="KW-0507">mRNA processing</keyword>
<keyword id="KW-0508">mRNA splicing</keyword>
<keyword id="KW-0539">Nucleus</keyword>
<keyword id="KW-0597">Phosphoprotein</keyword>
<keyword id="KW-1185">Reference proteome</keyword>
<keyword id="KW-0677">Repeat</keyword>
<keyword id="KW-0747">Spliceosome</keyword>
<keyword id="KW-0804">Transcription</keyword>
<dbReference type="EMBL" id="AK002890">
    <property type="protein sequence ID" value="BAB22435.1"/>
    <property type="molecule type" value="mRNA"/>
</dbReference>
<dbReference type="EMBL" id="AK008628">
    <property type="protein sequence ID" value="BAB25790.1"/>
    <property type="molecule type" value="mRNA"/>
</dbReference>
<dbReference type="EMBL" id="BC021341">
    <property type="protein sequence ID" value="AAH21341.1"/>
    <property type="molecule type" value="mRNA"/>
</dbReference>
<dbReference type="CCDS" id="CCDS22065.1"/>
<dbReference type="RefSeq" id="NP_080432.1">
    <property type="nucleotide sequence ID" value="NM_026156.2"/>
</dbReference>
<dbReference type="SMR" id="Q9DCD2"/>
<dbReference type="BioGRID" id="212186">
    <property type="interactions" value="3"/>
</dbReference>
<dbReference type="FunCoup" id="Q9DCD2">
    <property type="interactions" value="3616"/>
</dbReference>
<dbReference type="IntAct" id="Q9DCD2">
    <property type="interactions" value="1"/>
</dbReference>
<dbReference type="STRING" id="10090.ENSMUSP00000019614"/>
<dbReference type="iPTMnet" id="Q9DCD2"/>
<dbReference type="PhosphoSitePlus" id="Q9DCD2"/>
<dbReference type="PaxDb" id="10090-ENSMUSP00000019614"/>
<dbReference type="ProteomicsDB" id="258788"/>
<dbReference type="Pumba" id="Q9DCD2"/>
<dbReference type="Antibodypedia" id="12104">
    <property type="antibodies" value="302 antibodies from 34 providers"/>
</dbReference>
<dbReference type="DNASU" id="67439"/>
<dbReference type="Ensembl" id="ENSMUST00000019614.13">
    <property type="protein sequence ID" value="ENSMUSP00000019614.7"/>
    <property type="gene ID" value="ENSMUSG00000019470.13"/>
</dbReference>
<dbReference type="GeneID" id="67439"/>
<dbReference type="KEGG" id="mmu:67439"/>
<dbReference type="UCSC" id="uc009kry.1">
    <property type="organism name" value="mouse"/>
</dbReference>
<dbReference type="AGR" id="MGI:1914689"/>
<dbReference type="CTD" id="56949"/>
<dbReference type="MGI" id="MGI:1914689">
    <property type="gene designation" value="Xab2"/>
</dbReference>
<dbReference type="VEuPathDB" id="HostDB:ENSMUSG00000019470"/>
<dbReference type="eggNOG" id="KOG2047">
    <property type="taxonomic scope" value="Eukaryota"/>
</dbReference>
<dbReference type="GeneTree" id="ENSGT00550000075140"/>
<dbReference type="HOGENOM" id="CLU_007736_2_1_1"/>
<dbReference type="InParanoid" id="Q9DCD2"/>
<dbReference type="OMA" id="IWYNYLR"/>
<dbReference type="OrthoDB" id="10067343at2759"/>
<dbReference type="PhylomeDB" id="Q9DCD2"/>
<dbReference type="TreeFam" id="TF300866"/>
<dbReference type="Reactome" id="R-MMU-6781823">
    <property type="pathway name" value="Formation of TC-NER Pre-Incision Complex"/>
</dbReference>
<dbReference type="Reactome" id="R-MMU-6782135">
    <property type="pathway name" value="Dual incision in TC-NER"/>
</dbReference>
<dbReference type="Reactome" id="R-MMU-6782210">
    <property type="pathway name" value="Gap-filling DNA repair synthesis and ligation in TC-NER"/>
</dbReference>
<dbReference type="Reactome" id="R-MMU-72163">
    <property type="pathway name" value="mRNA Splicing - Major Pathway"/>
</dbReference>
<dbReference type="BioGRID-ORCS" id="67439">
    <property type="hits" value="25 hits in 108 CRISPR screens"/>
</dbReference>
<dbReference type="ChiTaRS" id="Xab2">
    <property type="organism name" value="mouse"/>
</dbReference>
<dbReference type="PRO" id="PR:Q9DCD2"/>
<dbReference type="Proteomes" id="UP000000589">
    <property type="component" value="Chromosome 8"/>
</dbReference>
<dbReference type="RNAct" id="Q9DCD2">
    <property type="molecule type" value="protein"/>
</dbReference>
<dbReference type="Bgee" id="ENSMUSG00000019470">
    <property type="expression patterns" value="Expressed in floor plate of midbrain and 267 other cell types or tissues"/>
</dbReference>
<dbReference type="ExpressionAtlas" id="Q9DCD2">
    <property type="expression patterns" value="baseline and differential"/>
</dbReference>
<dbReference type="GO" id="GO:0005654">
    <property type="term" value="C:nucleoplasm"/>
    <property type="evidence" value="ECO:0007669"/>
    <property type="project" value="Ensembl"/>
</dbReference>
<dbReference type="GO" id="GO:0005634">
    <property type="term" value="C:nucleus"/>
    <property type="evidence" value="ECO:0000250"/>
    <property type="project" value="UniProtKB"/>
</dbReference>
<dbReference type="GO" id="GO:0071007">
    <property type="term" value="C:U2-type catalytic step 2 spliceosome"/>
    <property type="evidence" value="ECO:0000250"/>
    <property type="project" value="UniProtKB"/>
</dbReference>
<dbReference type="GO" id="GO:0001824">
    <property type="term" value="P:blastocyst development"/>
    <property type="evidence" value="ECO:0000315"/>
    <property type="project" value="MGI"/>
</dbReference>
<dbReference type="GO" id="GO:0021987">
    <property type="term" value="P:cerebral cortex development"/>
    <property type="evidence" value="ECO:0007669"/>
    <property type="project" value="Ensembl"/>
</dbReference>
<dbReference type="GO" id="GO:0006351">
    <property type="term" value="P:DNA-templated transcription"/>
    <property type="evidence" value="ECO:0000250"/>
    <property type="project" value="UniProtKB"/>
</dbReference>
<dbReference type="GO" id="GO:0000398">
    <property type="term" value="P:mRNA splicing, via spliceosome"/>
    <property type="evidence" value="ECO:0000250"/>
    <property type="project" value="UniProtKB"/>
</dbReference>
<dbReference type="GO" id="GO:0006283">
    <property type="term" value="P:transcription-coupled nucleotide-excision repair"/>
    <property type="evidence" value="ECO:0000250"/>
    <property type="project" value="UniProtKB"/>
</dbReference>
<dbReference type="FunFam" id="1.25.40.10:FF:000023">
    <property type="entry name" value="Pre-mRNA-splicing factor SYF1"/>
    <property type="match status" value="1"/>
</dbReference>
<dbReference type="FunFam" id="1.25.40.430:FF:000006">
    <property type="entry name" value="Pre-mRNA-splicing factor SYF1"/>
    <property type="match status" value="1"/>
</dbReference>
<dbReference type="FunFam" id="1.25.40.10:FF:000137">
    <property type="entry name" value="Pre-mRNA-splicing factor syf1"/>
    <property type="match status" value="1"/>
</dbReference>
<dbReference type="FunFam" id="1.25.40.10:FF:000411">
    <property type="entry name" value="pre-mRNA-splicing factor SYF1"/>
    <property type="match status" value="1"/>
</dbReference>
<dbReference type="FunFam" id="1.25.40.10:FF:000519">
    <property type="entry name" value="pre-mRNA-splicing factor SYF1"/>
    <property type="match status" value="1"/>
</dbReference>
<dbReference type="FunFam" id="1.25.40.10:FF:001071">
    <property type="entry name" value="pre-mRNA-splicing factor SYF1-like"/>
    <property type="match status" value="1"/>
</dbReference>
<dbReference type="Gene3D" id="1.25.40.10">
    <property type="entry name" value="Tetratricopeptide repeat domain"/>
    <property type="match status" value="5"/>
</dbReference>
<dbReference type="InterPro" id="IPR003107">
    <property type="entry name" value="HAT"/>
</dbReference>
<dbReference type="InterPro" id="IPR055433">
    <property type="entry name" value="HAT_Syf1-like_N"/>
</dbReference>
<dbReference type="InterPro" id="IPR056350">
    <property type="entry name" value="HAT_Syf1_central"/>
</dbReference>
<dbReference type="InterPro" id="IPR055430">
    <property type="entry name" value="HAT_Syf1_CNRKL1_C"/>
</dbReference>
<dbReference type="InterPro" id="IPR045075">
    <property type="entry name" value="Syf1-like"/>
</dbReference>
<dbReference type="InterPro" id="IPR011990">
    <property type="entry name" value="TPR-like_helical_dom_sf"/>
</dbReference>
<dbReference type="InterPro" id="IPR019734">
    <property type="entry name" value="TPR_rpt"/>
</dbReference>
<dbReference type="PANTHER" id="PTHR11246">
    <property type="entry name" value="PRE-MRNA SPLICING FACTOR"/>
    <property type="match status" value="1"/>
</dbReference>
<dbReference type="PANTHER" id="PTHR11246:SF5">
    <property type="entry name" value="PRE-MRNA-SPLICING FACTOR SYF1"/>
    <property type="match status" value="1"/>
</dbReference>
<dbReference type="Pfam" id="PF23231">
    <property type="entry name" value="HAT_Syf1_CNRKL1_C"/>
    <property type="match status" value="1"/>
</dbReference>
<dbReference type="Pfam" id="PF23233">
    <property type="entry name" value="HAT_Syf1_CNRKL1_N"/>
    <property type="match status" value="1"/>
</dbReference>
<dbReference type="Pfam" id="PF23220">
    <property type="entry name" value="HAT_Syf1_M"/>
    <property type="match status" value="1"/>
</dbReference>
<dbReference type="SMART" id="SM00386">
    <property type="entry name" value="HAT"/>
    <property type="match status" value="10"/>
</dbReference>
<dbReference type="SMART" id="SM00028">
    <property type="entry name" value="TPR"/>
    <property type="match status" value="3"/>
</dbReference>
<dbReference type="SUPFAM" id="SSF48452">
    <property type="entry name" value="TPR-like"/>
    <property type="match status" value="4"/>
</dbReference>
<sequence>MVVMARVPRSERPDLVFEEEDLPYEEEIMRNQFSVKCWLRYIEFKQGAPKPRLNQLYERALKLLPCSYKLWYRYLKARRAQVKHRCVTDPAYEDVNNCHERAFVFMHKMPRLWLDYCQFLMDQGRVTHTRRTFDRALRALPITQHSRIWPLYLRFLRSHPLPETAVRGYRRFLKLSPESAEEYIEYLKSSDRLDEAAQRLATVVNDERFVSKAGKSNYQLWHELCDLISQNPDKVQSLNVDAIIRGGLTRFTDQLGKLWCSLADYYIRSGHFEKARDVYEEAIRTVMTVRDFTQVFDSYAQFEESMIAAKMETASELGREEEDDVDLELRLARFEQLISRRPLLLNSVLLRQNPHHVHEWHKRVALHQGRPREIINTYTEAVQTVDPFKATGKPHTLWVAFAKFYEDNGQLDDARVILEKATKVNFKQVDDLASVWCQCGELELRHENYDEALKLLRKATALPARRAEYFDGSEPVQNRVYKSLKVWSMLADLEESLGTFQSTKAVYDRILDLRIATPQIVINYAMFLEEHKYFEESFKAYERGISLFKWPNVSDIWSTYLTKFISRYGGRKLERARDLFEQALDGCPPKYAKTLYLLYAQLEEEWGLARHAMAVYDRATRAVEPAQQYDMFNIYIKRAAEIYGVTHTRGIYQKAIEVLSDEHAREMCLRFADMECKLGEIDRARAIYSFCSQICDPRTTGAFWQTWKDFEVRHGNEDTIREMLRIRRSVQATYNTQVNFMASQMLKVSGSATGTVSDLAPGQSGMDDMKLLEQRAEQLAAEAERDQPPRAQSKIFFVRSDASREELAELAQQANPEEIQLGEDEDEDEMDLEPNEVRLEQQSVPAAVFGSLKED</sequence>
<accession>Q9DCD2</accession>
<accession>Q8VDT5</accession>
<accession>Q9CVD8</accession>
<organism evidence="6">
    <name type="scientific">Mus musculus</name>
    <name type="common">Mouse</name>
    <dbReference type="NCBI Taxonomy" id="10090"/>
    <lineage>
        <taxon>Eukaryota</taxon>
        <taxon>Metazoa</taxon>
        <taxon>Chordata</taxon>
        <taxon>Craniata</taxon>
        <taxon>Vertebrata</taxon>
        <taxon>Euteleostomi</taxon>
        <taxon>Mammalia</taxon>
        <taxon>Eutheria</taxon>
        <taxon>Euarchontoglires</taxon>
        <taxon>Glires</taxon>
        <taxon>Rodentia</taxon>
        <taxon>Myomorpha</taxon>
        <taxon>Muroidea</taxon>
        <taxon>Muridae</taxon>
        <taxon>Murinae</taxon>
        <taxon>Mus</taxon>
        <taxon>Mus</taxon>
    </lineage>
</organism>
<name>SYF1_MOUSE</name>
<reference key="1">
    <citation type="journal article" date="2005" name="Science">
        <title>The transcriptional landscape of the mammalian genome.</title>
        <authorList>
            <person name="Carninci P."/>
            <person name="Kasukawa T."/>
            <person name="Katayama S."/>
            <person name="Gough J."/>
            <person name="Frith M.C."/>
            <person name="Maeda N."/>
            <person name="Oyama R."/>
            <person name="Ravasi T."/>
            <person name="Lenhard B."/>
            <person name="Wells C."/>
            <person name="Kodzius R."/>
            <person name="Shimokawa K."/>
            <person name="Bajic V.B."/>
            <person name="Brenner S.E."/>
            <person name="Batalov S."/>
            <person name="Forrest A.R."/>
            <person name="Zavolan M."/>
            <person name="Davis M.J."/>
            <person name="Wilming L.G."/>
            <person name="Aidinis V."/>
            <person name="Allen J.E."/>
            <person name="Ambesi-Impiombato A."/>
            <person name="Apweiler R."/>
            <person name="Aturaliya R.N."/>
            <person name="Bailey T.L."/>
            <person name="Bansal M."/>
            <person name="Baxter L."/>
            <person name="Beisel K.W."/>
            <person name="Bersano T."/>
            <person name="Bono H."/>
            <person name="Chalk A.M."/>
            <person name="Chiu K.P."/>
            <person name="Choudhary V."/>
            <person name="Christoffels A."/>
            <person name="Clutterbuck D.R."/>
            <person name="Crowe M.L."/>
            <person name="Dalla E."/>
            <person name="Dalrymple B.P."/>
            <person name="de Bono B."/>
            <person name="Della Gatta G."/>
            <person name="di Bernardo D."/>
            <person name="Down T."/>
            <person name="Engstrom P."/>
            <person name="Fagiolini M."/>
            <person name="Faulkner G."/>
            <person name="Fletcher C.F."/>
            <person name="Fukushima T."/>
            <person name="Furuno M."/>
            <person name="Futaki S."/>
            <person name="Gariboldi M."/>
            <person name="Georgii-Hemming P."/>
            <person name="Gingeras T.R."/>
            <person name="Gojobori T."/>
            <person name="Green R.E."/>
            <person name="Gustincich S."/>
            <person name="Harbers M."/>
            <person name="Hayashi Y."/>
            <person name="Hensch T.K."/>
            <person name="Hirokawa N."/>
            <person name="Hill D."/>
            <person name="Huminiecki L."/>
            <person name="Iacono M."/>
            <person name="Ikeo K."/>
            <person name="Iwama A."/>
            <person name="Ishikawa T."/>
            <person name="Jakt M."/>
            <person name="Kanapin A."/>
            <person name="Katoh M."/>
            <person name="Kawasawa Y."/>
            <person name="Kelso J."/>
            <person name="Kitamura H."/>
            <person name="Kitano H."/>
            <person name="Kollias G."/>
            <person name="Krishnan S.P."/>
            <person name="Kruger A."/>
            <person name="Kummerfeld S.K."/>
            <person name="Kurochkin I.V."/>
            <person name="Lareau L.F."/>
            <person name="Lazarevic D."/>
            <person name="Lipovich L."/>
            <person name="Liu J."/>
            <person name="Liuni S."/>
            <person name="McWilliam S."/>
            <person name="Madan Babu M."/>
            <person name="Madera M."/>
            <person name="Marchionni L."/>
            <person name="Matsuda H."/>
            <person name="Matsuzawa S."/>
            <person name="Miki H."/>
            <person name="Mignone F."/>
            <person name="Miyake S."/>
            <person name="Morris K."/>
            <person name="Mottagui-Tabar S."/>
            <person name="Mulder N."/>
            <person name="Nakano N."/>
            <person name="Nakauchi H."/>
            <person name="Ng P."/>
            <person name="Nilsson R."/>
            <person name="Nishiguchi S."/>
            <person name="Nishikawa S."/>
            <person name="Nori F."/>
            <person name="Ohara O."/>
            <person name="Okazaki Y."/>
            <person name="Orlando V."/>
            <person name="Pang K.C."/>
            <person name="Pavan W.J."/>
            <person name="Pavesi G."/>
            <person name="Pesole G."/>
            <person name="Petrovsky N."/>
            <person name="Piazza S."/>
            <person name="Reed J."/>
            <person name="Reid J.F."/>
            <person name="Ring B.Z."/>
            <person name="Ringwald M."/>
            <person name="Rost B."/>
            <person name="Ruan Y."/>
            <person name="Salzberg S.L."/>
            <person name="Sandelin A."/>
            <person name="Schneider C."/>
            <person name="Schoenbach C."/>
            <person name="Sekiguchi K."/>
            <person name="Semple C.A."/>
            <person name="Seno S."/>
            <person name="Sessa L."/>
            <person name="Sheng Y."/>
            <person name="Shibata Y."/>
            <person name="Shimada H."/>
            <person name="Shimada K."/>
            <person name="Silva D."/>
            <person name="Sinclair B."/>
            <person name="Sperling S."/>
            <person name="Stupka E."/>
            <person name="Sugiura K."/>
            <person name="Sultana R."/>
            <person name="Takenaka Y."/>
            <person name="Taki K."/>
            <person name="Tammoja K."/>
            <person name="Tan S.L."/>
            <person name="Tang S."/>
            <person name="Taylor M.S."/>
            <person name="Tegner J."/>
            <person name="Teichmann S.A."/>
            <person name="Ueda H.R."/>
            <person name="van Nimwegen E."/>
            <person name="Verardo R."/>
            <person name="Wei C.L."/>
            <person name="Yagi K."/>
            <person name="Yamanishi H."/>
            <person name="Zabarovsky E."/>
            <person name="Zhu S."/>
            <person name="Zimmer A."/>
            <person name="Hide W."/>
            <person name="Bult C."/>
            <person name="Grimmond S.M."/>
            <person name="Teasdale R.D."/>
            <person name="Liu E.T."/>
            <person name="Brusic V."/>
            <person name="Quackenbush J."/>
            <person name="Wahlestedt C."/>
            <person name="Mattick J.S."/>
            <person name="Hume D.A."/>
            <person name="Kai C."/>
            <person name="Sasaki D."/>
            <person name="Tomaru Y."/>
            <person name="Fukuda S."/>
            <person name="Kanamori-Katayama M."/>
            <person name="Suzuki M."/>
            <person name="Aoki J."/>
            <person name="Arakawa T."/>
            <person name="Iida J."/>
            <person name="Imamura K."/>
            <person name="Itoh M."/>
            <person name="Kato T."/>
            <person name="Kawaji H."/>
            <person name="Kawagashira N."/>
            <person name="Kawashima T."/>
            <person name="Kojima M."/>
            <person name="Kondo S."/>
            <person name="Konno H."/>
            <person name="Nakano K."/>
            <person name="Ninomiya N."/>
            <person name="Nishio T."/>
            <person name="Okada M."/>
            <person name="Plessy C."/>
            <person name="Shibata K."/>
            <person name="Shiraki T."/>
            <person name="Suzuki S."/>
            <person name="Tagami M."/>
            <person name="Waki K."/>
            <person name="Watahiki A."/>
            <person name="Okamura-Oho Y."/>
            <person name="Suzuki H."/>
            <person name="Kawai J."/>
            <person name="Hayashizaki Y."/>
        </authorList>
    </citation>
    <scope>NUCLEOTIDE SEQUENCE [LARGE SCALE MRNA]</scope>
    <source>
        <strain>C57BL/6J</strain>
        <tissue>Kidney</tissue>
        <tissue>Stomach</tissue>
    </source>
</reference>
<reference key="2">
    <citation type="journal article" date="2004" name="Genome Res.">
        <title>The status, quality, and expansion of the NIH full-length cDNA project: the Mammalian Gene Collection (MGC).</title>
        <authorList>
            <consortium name="The MGC Project Team"/>
        </authorList>
    </citation>
    <scope>NUCLEOTIDE SEQUENCE [LARGE SCALE MRNA]</scope>
</reference>
<reference key="3">
    <citation type="journal article" date="2005" name="DNA Repair">
        <title>Disruption of mouse XAB2 gene involved in pre-mRNA splicing, transcription and transcription-coupled DNA repair results in preimplantation lethality.</title>
        <authorList>
            <person name="Yonemasu R."/>
            <person name="Minami M."/>
            <person name="Nakatsu Y."/>
            <person name="Takeuchi M."/>
            <person name="Kuraoka I."/>
            <person name="Matsuda Y."/>
            <person name="Higashi Y."/>
            <person name="Kondoh H."/>
            <person name="Tanaka K."/>
        </authorList>
    </citation>
    <scope>DISRUPTION PHENOTYPE</scope>
</reference>
<reference key="4">
    <citation type="journal article" date="2010" name="Cell">
        <title>A tissue-specific atlas of mouse protein phosphorylation and expression.</title>
        <authorList>
            <person name="Huttlin E.L."/>
            <person name="Jedrychowski M.P."/>
            <person name="Elias J.E."/>
            <person name="Goswami T."/>
            <person name="Rad R."/>
            <person name="Beausoleil S.A."/>
            <person name="Villen J."/>
            <person name="Haas W."/>
            <person name="Sowa M.E."/>
            <person name="Gygi S.P."/>
        </authorList>
    </citation>
    <scope>IDENTIFICATION BY MASS SPECTROMETRY [LARGE SCALE ANALYSIS]</scope>
    <source>
        <tissue>Spleen</tissue>
    </source>
</reference>